<gene>
    <name type="primary">ATG14</name>
    <name type="ORF">Kpol_534p20</name>
</gene>
<dbReference type="EMBL" id="DS480402">
    <property type="protein sequence ID" value="EDO17541.1"/>
    <property type="molecule type" value="Genomic_DNA"/>
</dbReference>
<dbReference type="RefSeq" id="XP_001645399.1">
    <property type="nucleotide sequence ID" value="XM_001645349.1"/>
</dbReference>
<dbReference type="SMR" id="A7TJJ8"/>
<dbReference type="FunCoup" id="A7TJJ8">
    <property type="interactions" value="70"/>
</dbReference>
<dbReference type="STRING" id="436907.A7TJJ8"/>
<dbReference type="GeneID" id="5545763"/>
<dbReference type="KEGG" id="vpo:Kpol_534p20"/>
<dbReference type="eggNOG" id="ENOG502RY86">
    <property type="taxonomic scope" value="Eukaryota"/>
</dbReference>
<dbReference type="HOGENOM" id="CLU_069448_0_0_1"/>
<dbReference type="InParanoid" id="A7TJJ8"/>
<dbReference type="OMA" id="MYCSHCI"/>
<dbReference type="OrthoDB" id="4068791at2759"/>
<dbReference type="PhylomeDB" id="A7TJJ8"/>
<dbReference type="Proteomes" id="UP000000267">
    <property type="component" value="Unassembled WGS sequence"/>
</dbReference>
<dbReference type="GO" id="GO:0000329">
    <property type="term" value="C:fungal-type vacuole membrane"/>
    <property type="evidence" value="ECO:0007669"/>
    <property type="project" value="EnsemblFungi"/>
</dbReference>
<dbReference type="GO" id="GO:0034045">
    <property type="term" value="C:phagophore assembly site membrane"/>
    <property type="evidence" value="ECO:0007669"/>
    <property type="project" value="UniProtKB-SubCell"/>
</dbReference>
<dbReference type="GO" id="GO:0034271">
    <property type="term" value="C:phosphatidylinositol 3-kinase complex, class III, type I"/>
    <property type="evidence" value="ECO:0007669"/>
    <property type="project" value="EnsemblFungi"/>
</dbReference>
<dbReference type="GO" id="GO:0120095">
    <property type="term" value="C:vacuole-isolation membrane contact site"/>
    <property type="evidence" value="ECO:0007669"/>
    <property type="project" value="EnsemblFungi"/>
</dbReference>
<dbReference type="GO" id="GO:0051365">
    <property type="term" value="P:cellular response to potassium ion starvation"/>
    <property type="evidence" value="ECO:0007669"/>
    <property type="project" value="EnsemblFungi"/>
</dbReference>
<dbReference type="GO" id="GO:0032258">
    <property type="term" value="P:cytoplasm to vacuole targeting by the Cvt pathway"/>
    <property type="evidence" value="ECO:0007669"/>
    <property type="project" value="EnsemblFungi"/>
</dbReference>
<dbReference type="GO" id="GO:0000425">
    <property type="term" value="P:pexophagy"/>
    <property type="evidence" value="ECO:0007669"/>
    <property type="project" value="EnsemblFungi"/>
</dbReference>
<dbReference type="GO" id="GO:0034727">
    <property type="term" value="P:piecemeal microautophagy of the nucleus"/>
    <property type="evidence" value="ECO:0007669"/>
    <property type="project" value="EnsemblFungi"/>
</dbReference>
<dbReference type="InterPro" id="IPR023261">
    <property type="entry name" value="Autophagy-related_protein_14"/>
</dbReference>
<dbReference type="InterPro" id="IPR018791">
    <property type="entry name" value="UV_resistance/autophagy_Atg14"/>
</dbReference>
<dbReference type="Pfam" id="PF10186">
    <property type="entry name" value="ATG14"/>
    <property type="match status" value="1"/>
</dbReference>
<dbReference type="PRINTS" id="PR02030">
    <property type="entry name" value="AUTOPHGYRP14"/>
</dbReference>
<protein>
    <recommendedName>
        <fullName>Autophagy-related protein 14</fullName>
    </recommendedName>
</protein>
<proteinExistence type="inferred from homology"/>
<feature type="chain" id="PRO_0000317955" description="Autophagy-related protein 14">
    <location>
        <begin position="1"/>
        <end position="337"/>
    </location>
</feature>
<feature type="region of interest" description="Cysteine repeats" evidence="1">
    <location>
        <begin position="5"/>
        <end position="20"/>
    </location>
</feature>
<feature type="coiled-coil region" evidence="2">
    <location>
        <begin position="87"/>
        <end position="153"/>
    </location>
</feature>
<evidence type="ECO:0000250" key="1"/>
<evidence type="ECO:0000255" key="2"/>
<evidence type="ECO:0000305" key="3"/>
<organism>
    <name type="scientific">Vanderwaltozyma polyspora (strain ATCC 22028 / DSM 70294 / BCRC 21397 / CBS 2163 / NBRC 10782 / NRRL Y-8283 / UCD 57-17)</name>
    <name type="common">Kluyveromyces polysporus</name>
    <dbReference type="NCBI Taxonomy" id="436907"/>
    <lineage>
        <taxon>Eukaryota</taxon>
        <taxon>Fungi</taxon>
        <taxon>Dikarya</taxon>
        <taxon>Ascomycota</taxon>
        <taxon>Saccharomycotina</taxon>
        <taxon>Saccharomycetes</taxon>
        <taxon>Saccharomycetales</taxon>
        <taxon>Saccharomycetaceae</taxon>
        <taxon>Vanderwaltozyma</taxon>
    </lineage>
</organism>
<comment type="function">
    <text evidence="1">Required for cytoplasm to vacuole transport (Cvt) and autophagy as a part of the autophagy-specific VPS34 PI3-kinase complex I. This complex is essential to recruit the ATG8-phosphatidylinositol conjugate and the ATG12-ATG5 conjugate to the pre-autophagosomal structure. ATG14 mediates the specific binding of the VPS34 PI3-kinase complex I to the preautophagosomal structure (PAS) (By similarity).</text>
</comment>
<comment type="subcellular location">
    <subcellularLocation>
        <location evidence="1">Preautophagosomal structure membrane</location>
        <topology evidence="1">Peripheral membrane protein</topology>
    </subcellularLocation>
    <subcellularLocation>
        <location evidence="1">Vacuole membrane</location>
        <topology evidence="1">Peripheral membrane protein</topology>
    </subcellularLocation>
</comment>
<comment type="domain">
    <text evidence="1">Coiled-Coils at the N-terminal half are essential for autophagy.</text>
</comment>
<comment type="similarity">
    <text evidence="3">Belongs to the ATG14 family.</text>
</comment>
<reference key="1">
    <citation type="journal article" date="2007" name="Proc. Natl. Acad. Sci. U.S.A.">
        <title>Independent sorting-out of thousands of duplicated gene pairs in two yeast species descended from a whole-genome duplication.</title>
        <authorList>
            <person name="Scannell D.R."/>
            <person name="Frank A.C."/>
            <person name="Conant G.C."/>
            <person name="Byrne K.P."/>
            <person name="Woolfit M."/>
            <person name="Wolfe K.H."/>
        </authorList>
    </citation>
    <scope>NUCLEOTIDE SEQUENCE [LARGE SCALE GENOMIC DNA]</scope>
    <source>
        <strain>ATCC 22028 / DSM 70294 / BCRC 21397 / CBS 2163 / NBRC 10782 / NRRL Y-8283 / UCD 57-17</strain>
    </source>
</reference>
<keyword id="KW-0072">Autophagy</keyword>
<keyword id="KW-0175">Coiled coil</keyword>
<keyword id="KW-0472">Membrane</keyword>
<keyword id="KW-0653">Protein transport</keyword>
<keyword id="KW-1185">Reference proteome</keyword>
<keyword id="KW-0813">Transport</keyword>
<keyword id="KW-0926">Vacuole</keyword>
<accession>A7TJJ8</accession>
<name>ATG14_VANPO</name>
<sequence>MTIQCSVCRNHVQSMYCAHCINTSPNLLHPLRMQLLMVQQKNKVLKGKVEDILSHALDKNWKSSDNDTEGIILADRLHKLEVLKRTKRNNRVRYRISQLTKRIENKQQRLQSLRLQITTTDVAKVSNANKKEIEEIRTKYLQLNEVVKREQELECQSLVDWFILRKRNSYEIPYTLVFLPVVSLKNFHKLPKAVTISSLHKMFQFLEIYSQIISFPLLYKGDEIKEKTINTDEEIAKLITKLVINVLQIGRFKNLIPKDAIDLVWLLDQYDVDSLFYNVIVNHKMECRVVLFHWTFGKVSKVVTETLQLPAGSTTSFPRQQVGDTYDKDDDMWHIVG</sequence>